<organism>
    <name type="scientific">Caldanaerobacter subterraneus subsp. tengcongensis (strain DSM 15242 / JCM 11007 / NBRC 100824 / MB4)</name>
    <name type="common">Thermoanaerobacter tengcongensis</name>
    <dbReference type="NCBI Taxonomy" id="273068"/>
    <lineage>
        <taxon>Bacteria</taxon>
        <taxon>Bacillati</taxon>
        <taxon>Bacillota</taxon>
        <taxon>Clostridia</taxon>
        <taxon>Thermoanaerobacterales</taxon>
        <taxon>Thermoanaerobacteraceae</taxon>
        <taxon>Caldanaerobacter</taxon>
    </lineage>
</organism>
<keyword id="KW-0963">Cytoplasm</keyword>
<keyword id="KW-0620">Polyamine biosynthesis</keyword>
<keyword id="KW-1185">Reference proteome</keyword>
<keyword id="KW-0745">Spermidine biosynthesis</keyword>
<keyword id="KW-0808">Transferase</keyword>
<reference key="1">
    <citation type="journal article" date="2002" name="Genome Res.">
        <title>A complete sequence of the T. tengcongensis genome.</title>
        <authorList>
            <person name="Bao Q."/>
            <person name="Tian Y."/>
            <person name="Li W."/>
            <person name="Xu Z."/>
            <person name="Xuan Z."/>
            <person name="Hu S."/>
            <person name="Dong W."/>
            <person name="Yang J."/>
            <person name="Chen Y."/>
            <person name="Xue Y."/>
            <person name="Xu Y."/>
            <person name="Lai X."/>
            <person name="Huang L."/>
            <person name="Dong X."/>
            <person name="Ma Y."/>
            <person name="Ling L."/>
            <person name="Tan H."/>
            <person name="Chen R."/>
            <person name="Wang J."/>
            <person name="Yu J."/>
            <person name="Yang H."/>
        </authorList>
    </citation>
    <scope>NUCLEOTIDE SEQUENCE [LARGE SCALE GENOMIC DNA]</scope>
    <source>
        <strain>DSM 15242 / JCM 11007 / NBRC 100824 / MB4</strain>
    </source>
</reference>
<proteinExistence type="inferred from homology"/>
<comment type="function">
    <text evidence="1">Catalyzes the irreversible transfer of a propylamine group from the amino donor S-adenosylmethioninamine (decarboxy-AdoMet) to putrescine (1,4-diaminobutane) to yield spermidine.</text>
</comment>
<comment type="catalytic activity">
    <reaction evidence="1">
        <text>S-adenosyl 3-(methylsulfanyl)propylamine + putrescine = S-methyl-5'-thioadenosine + spermidine + H(+)</text>
        <dbReference type="Rhea" id="RHEA:12721"/>
        <dbReference type="ChEBI" id="CHEBI:15378"/>
        <dbReference type="ChEBI" id="CHEBI:17509"/>
        <dbReference type="ChEBI" id="CHEBI:57443"/>
        <dbReference type="ChEBI" id="CHEBI:57834"/>
        <dbReference type="ChEBI" id="CHEBI:326268"/>
        <dbReference type="EC" id="2.5.1.16"/>
    </reaction>
</comment>
<comment type="pathway">
    <text evidence="1">Amine and polyamine biosynthesis; spermidine biosynthesis; spermidine from putrescine: step 1/1.</text>
</comment>
<comment type="subunit">
    <text evidence="1">Homodimer or homotetramer.</text>
</comment>
<comment type="subcellular location">
    <subcellularLocation>
        <location evidence="1">Cytoplasm</location>
    </subcellularLocation>
</comment>
<comment type="similarity">
    <text evidence="1">Belongs to the spermidine/spermine synthase family.</text>
</comment>
<sequence>MILKLEVGVGLKNLNGKWGLDSSKEFYWEPDVEGGYRVYKVKSVIIEHQSLYQKIDIVELETWGKSLFLDGSLQSTESDEFIYHELLVHPAMRVHPSPKRVLICGVGEGKSVREVLKYPTVKEVIGVDIDKEVVALCQKHLGKTPIDDKRVRLVYQDVAEFIKNYRGEPFDVAIVDVTDDLDGPARSVHQLDFYKRLYEILGEKATVVVQGTSAFSKVKNVGFCHIYEILKEVFPFVIPYADYIPSFSDLWTFFVALKGIKDLTPRHEIPRDLKYYDEYTNERIFTLAKPLREKLGV</sequence>
<evidence type="ECO:0000255" key="1">
    <source>
        <dbReference type="HAMAP-Rule" id="MF_00198"/>
    </source>
</evidence>
<gene>
    <name evidence="1" type="primary">speE2</name>
    <name type="ordered locus">TTE1748</name>
</gene>
<name>SPEE2_CALS4</name>
<dbReference type="EC" id="2.5.1.16" evidence="1"/>
<dbReference type="EMBL" id="AE008691">
    <property type="protein sequence ID" value="AAM24942.1"/>
    <property type="molecule type" value="Genomic_DNA"/>
</dbReference>
<dbReference type="SMR" id="Q8R977"/>
<dbReference type="STRING" id="273068.TTE1748"/>
<dbReference type="KEGG" id="tte:TTE1748"/>
<dbReference type="eggNOG" id="COG0421">
    <property type="taxonomic scope" value="Bacteria"/>
</dbReference>
<dbReference type="HOGENOM" id="CLU_048199_0_1_9"/>
<dbReference type="OrthoDB" id="9793120at2"/>
<dbReference type="UniPathway" id="UPA00248">
    <property type="reaction ID" value="UER00314"/>
</dbReference>
<dbReference type="Proteomes" id="UP000000555">
    <property type="component" value="Chromosome"/>
</dbReference>
<dbReference type="GO" id="GO:0005737">
    <property type="term" value="C:cytoplasm"/>
    <property type="evidence" value="ECO:0007669"/>
    <property type="project" value="UniProtKB-SubCell"/>
</dbReference>
<dbReference type="GO" id="GO:0004766">
    <property type="term" value="F:spermidine synthase activity"/>
    <property type="evidence" value="ECO:0007669"/>
    <property type="project" value="UniProtKB-UniRule"/>
</dbReference>
<dbReference type="GO" id="GO:0010487">
    <property type="term" value="F:thermospermine synthase activity"/>
    <property type="evidence" value="ECO:0007669"/>
    <property type="project" value="UniProtKB-ARBA"/>
</dbReference>
<dbReference type="GO" id="GO:0008295">
    <property type="term" value="P:spermidine biosynthetic process"/>
    <property type="evidence" value="ECO:0007669"/>
    <property type="project" value="UniProtKB-UniRule"/>
</dbReference>
<dbReference type="CDD" id="cd02440">
    <property type="entry name" value="AdoMet_MTases"/>
    <property type="match status" value="1"/>
</dbReference>
<dbReference type="Gene3D" id="2.30.140.10">
    <property type="entry name" value="Spermidine synthase, tetramerisation domain"/>
    <property type="match status" value="1"/>
</dbReference>
<dbReference type="Gene3D" id="3.40.50.150">
    <property type="entry name" value="Vaccinia Virus protein VP39"/>
    <property type="match status" value="1"/>
</dbReference>
<dbReference type="HAMAP" id="MF_00198">
    <property type="entry name" value="Spermidine_synth"/>
    <property type="match status" value="1"/>
</dbReference>
<dbReference type="InterPro" id="IPR030374">
    <property type="entry name" value="PABS"/>
</dbReference>
<dbReference type="InterPro" id="IPR029063">
    <property type="entry name" value="SAM-dependent_MTases_sf"/>
</dbReference>
<dbReference type="InterPro" id="IPR001045">
    <property type="entry name" value="Spermi_synthase"/>
</dbReference>
<dbReference type="InterPro" id="IPR035246">
    <property type="entry name" value="Spermidine_synt_N"/>
</dbReference>
<dbReference type="InterPro" id="IPR037163">
    <property type="entry name" value="Spermidine_synt_N_sf"/>
</dbReference>
<dbReference type="PANTHER" id="PTHR43317">
    <property type="entry name" value="THERMOSPERMINE SYNTHASE ACAULIS5"/>
    <property type="match status" value="1"/>
</dbReference>
<dbReference type="PANTHER" id="PTHR43317:SF1">
    <property type="entry name" value="THERMOSPERMINE SYNTHASE ACAULIS5"/>
    <property type="match status" value="1"/>
</dbReference>
<dbReference type="Pfam" id="PF17284">
    <property type="entry name" value="Spermine_synt_N"/>
    <property type="match status" value="1"/>
</dbReference>
<dbReference type="Pfam" id="PF01564">
    <property type="entry name" value="Spermine_synth"/>
    <property type="match status" value="1"/>
</dbReference>
<dbReference type="SUPFAM" id="SSF53335">
    <property type="entry name" value="S-adenosyl-L-methionine-dependent methyltransferases"/>
    <property type="match status" value="1"/>
</dbReference>
<dbReference type="PROSITE" id="PS51006">
    <property type="entry name" value="PABS_2"/>
    <property type="match status" value="1"/>
</dbReference>
<protein>
    <recommendedName>
        <fullName evidence="1">Polyamine aminopropyltransferase 2</fullName>
    </recommendedName>
    <alternativeName>
        <fullName evidence="1">Putrescine aminopropyltransferase 2</fullName>
        <shortName evidence="1">PAPT 2</shortName>
    </alternativeName>
    <alternativeName>
        <fullName evidence="1">Spermidine synthase 2</fullName>
        <shortName evidence="1">SPDS 2</shortName>
        <shortName evidence="1">SPDSY 2</shortName>
        <ecNumber evidence="1">2.5.1.16</ecNumber>
    </alternativeName>
</protein>
<accession>Q8R977</accession>
<feature type="chain" id="PRO_0000156515" description="Polyamine aminopropyltransferase 2">
    <location>
        <begin position="1"/>
        <end position="297"/>
    </location>
</feature>
<feature type="domain" description="PABS" evidence="1">
    <location>
        <begin position="26"/>
        <end position="258"/>
    </location>
</feature>
<feature type="active site" description="Proton acceptor" evidence="1">
    <location>
        <position position="176"/>
    </location>
</feature>
<feature type="binding site" evidence="1">
    <location>
        <position position="53"/>
    </location>
    <ligand>
        <name>S-methyl-5'-thioadenosine</name>
        <dbReference type="ChEBI" id="CHEBI:17509"/>
    </ligand>
</feature>
<feature type="binding site" evidence="1">
    <location>
        <position position="84"/>
    </location>
    <ligand>
        <name>spermidine</name>
        <dbReference type="ChEBI" id="CHEBI:57834"/>
    </ligand>
</feature>
<feature type="binding site" evidence="1">
    <location>
        <position position="108"/>
    </location>
    <ligand>
        <name>spermidine</name>
        <dbReference type="ChEBI" id="CHEBI:57834"/>
    </ligand>
</feature>
<feature type="binding site" evidence="1">
    <location>
        <position position="128"/>
    </location>
    <ligand>
        <name>S-methyl-5'-thioadenosine</name>
        <dbReference type="ChEBI" id="CHEBI:17509"/>
    </ligand>
</feature>
<feature type="binding site" evidence="1">
    <location>
        <begin position="157"/>
        <end position="158"/>
    </location>
    <ligand>
        <name>S-methyl-5'-thioadenosine</name>
        <dbReference type="ChEBI" id="CHEBI:17509"/>
    </ligand>
</feature>
<feature type="binding site" evidence="1">
    <location>
        <position position="184"/>
    </location>
    <ligand>
        <name>S-methyl-5'-thioadenosine</name>
        <dbReference type="ChEBI" id="CHEBI:17509"/>
    </ligand>
</feature>